<geneLocation type="mitochondrion"/>
<keyword id="KW-0186">Copper</keyword>
<keyword id="KW-0249">Electron transport</keyword>
<keyword id="KW-0460">Magnesium</keyword>
<keyword id="KW-0472">Membrane</keyword>
<keyword id="KW-0479">Metal-binding</keyword>
<keyword id="KW-0496">Mitochondrion</keyword>
<keyword id="KW-0999">Mitochondrion inner membrane</keyword>
<keyword id="KW-1185">Reference proteome</keyword>
<keyword id="KW-0679">Respiratory chain</keyword>
<keyword id="KW-1278">Translocase</keyword>
<keyword id="KW-0812">Transmembrane</keyword>
<keyword id="KW-1133">Transmembrane helix</keyword>
<keyword id="KW-0813">Transport</keyword>
<name>COX2_MACFA</name>
<organism>
    <name type="scientific">Macaca fascicularis</name>
    <name type="common">Crab-eating macaque</name>
    <name type="synonym">Cynomolgus monkey</name>
    <dbReference type="NCBI Taxonomy" id="9541"/>
    <lineage>
        <taxon>Eukaryota</taxon>
        <taxon>Metazoa</taxon>
        <taxon>Chordata</taxon>
        <taxon>Craniata</taxon>
        <taxon>Vertebrata</taxon>
        <taxon>Euteleostomi</taxon>
        <taxon>Mammalia</taxon>
        <taxon>Eutheria</taxon>
        <taxon>Euarchontoglires</taxon>
        <taxon>Primates</taxon>
        <taxon>Haplorrhini</taxon>
        <taxon>Catarrhini</taxon>
        <taxon>Cercopithecidae</taxon>
        <taxon>Cercopithecinae</taxon>
        <taxon>Macaca</taxon>
    </lineage>
</organism>
<feature type="chain" id="PRO_0000183626" description="Cytochrome c oxidase subunit 2">
    <location>
        <begin position="1"/>
        <end position="227"/>
    </location>
</feature>
<feature type="topological domain" description="Mitochondrial intermembrane" evidence="3">
    <location>
        <begin position="1"/>
        <end position="14"/>
    </location>
</feature>
<feature type="transmembrane region" description="Helical; Name=I" evidence="3">
    <location>
        <begin position="15"/>
        <end position="45"/>
    </location>
</feature>
<feature type="topological domain" description="Mitochondrial matrix" evidence="3">
    <location>
        <begin position="46"/>
        <end position="59"/>
    </location>
</feature>
<feature type="transmembrane region" description="Helical; Name=II" evidence="3">
    <location>
        <begin position="60"/>
        <end position="87"/>
    </location>
</feature>
<feature type="topological domain" description="Mitochondrial intermembrane" evidence="3">
    <location>
        <begin position="88"/>
        <end position="227"/>
    </location>
</feature>
<feature type="binding site" evidence="3">
    <location>
        <position position="161"/>
    </location>
    <ligand>
        <name>Cu cation</name>
        <dbReference type="ChEBI" id="CHEBI:23378"/>
        <label>A1</label>
    </ligand>
</feature>
<feature type="binding site" evidence="3">
    <location>
        <position position="196"/>
    </location>
    <ligand>
        <name>Cu cation</name>
        <dbReference type="ChEBI" id="CHEBI:23378"/>
        <label>A1</label>
    </ligand>
</feature>
<feature type="binding site" evidence="3">
    <location>
        <position position="196"/>
    </location>
    <ligand>
        <name>Cu cation</name>
        <dbReference type="ChEBI" id="CHEBI:23378"/>
        <label>A2</label>
    </ligand>
</feature>
<feature type="binding site" evidence="3">
    <location>
        <position position="198"/>
    </location>
    <ligand>
        <name>Cu cation</name>
        <dbReference type="ChEBI" id="CHEBI:23378"/>
        <label>A2</label>
    </ligand>
</feature>
<feature type="binding site" evidence="3">
    <location>
        <position position="198"/>
    </location>
    <ligand>
        <name>Mg(2+)</name>
        <dbReference type="ChEBI" id="CHEBI:18420"/>
        <note>ligand shared with MT-CO1</note>
    </ligand>
</feature>
<feature type="binding site" evidence="3">
    <location>
        <position position="200"/>
    </location>
    <ligand>
        <name>Cu cation</name>
        <dbReference type="ChEBI" id="CHEBI:23378"/>
        <label>A1</label>
    </ligand>
</feature>
<feature type="binding site" evidence="3">
    <location>
        <position position="200"/>
    </location>
    <ligand>
        <name>Cu cation</name>
        <dbReference type="ChEBI" id="CHEBI:23378"/>
        <label>A2</label>
    </ligand>
</feature>
<feature type="binding site" evidence="3">
    <location>
        <position position="204"/>
    </location>
    <ligand>
        <name>Cu cation</name>
        <dbReference type="ChEBI" id="CHEBI:23378"/>
        <label>A2</label>
    </ligand>
</feature>
<feature type="binding site" evidence="3">
    <location>
        <position position="207"/>
    </location>
    <ligand>
        <name>Cu cation</name>
        <dbReference type="ChEBI" id="CHEBI:23378"/>
        <label>A1</label>
    </ligand>
</feature>
<feature type="sequence conflict" description="In Ref. 2; AAA31890." evidence="4" ref="2">
    <original>AL</original>
    <variation>LS</variation>
    <location>
        <begin position="43"/>
        <end position="44"/>
    </location>
</feature>
<feature type="sequence conflict" description="In Ref. 2; AAA31890." evidence="4" ref="2">
    <original>L</original>
    <variation>F</variation>
    <location>
        <position position="95"/>
    </location>
</feature>
<feature type="sequence conflict" description="In Ref. 2; AAA31890." evidence="4" ref="2">
    <original>K</original>
    <variation>N</variation>
    <location>
        <position position="129"/>
    </location>
</feature>
<feature type="sequence conflict" description="In Ref. 2; AAA31890." evidence="4" ref="2">
    <original>P</original>
    <variation>S</variation>
    <location>
        <position position="149"/>
    </location>
</feature>
<feature type="sequence conflict" description="In Ref. 2; AAA31890." evidence="4" ref="2">
    <original>D</original>
    <variation>E</variation>
    <location>
        <position position="212"/>
    </location>
</feature>
<accession>P11948</accession>
<proteinExistence type="evidence at transcript level"/>
<gene>
    <name type="primary">MT-CO2</name>
    <name type="synonym">COII</name>
    <name type="synonym">COX2</name>
    <name type="synonym">COXII</name>
    <name type="synonym">MTCO2</name>
</gene>
<reference key="1">
    <citation type="journal article" date="1987" name="J. Biol. Chem.">
        <title>Structure and evolution of primate cytochrome c oxidase subunit II gene.</title>
        <authorList>
            <person name="Ramharack R."/>
            <person name="Deeley R.G."/>
        </authorList>
    </citation>
    <scope>NUCLEOTIDE SEQUENCE [MRNA]</scope>
</reference>
<reference key="2">
    <citation type="journal article" date="1991" name="Proc. Natl. Acad. Sci. U.S.A.">
        <title>Resolution of the African hominoid trichotomy by use of a mitochondrial gene sequence.</title>
        <authorList>
            <person name="Ruvolo M."/>
            <person name="Disotell T.R."/>
            <person name="Allard M.W."/>
            <person name="Brown W.M."/>
            <person name="Honeycutt R.L."/>
        </authorList>
    </citation>
    <scope>NUCLEOTIDE SEQUENCE [GENOMIC DNA]</scope>
</reference>
<evidence type="ECO:0000250" key="1">
    <source>
        <dbReference type="UniProtKB" id="P00403"/>
    </source>
</evidence>
<evidence type="ECO:0000250" key="2">
    <source>
        <dbReference type="UniProtKB" id="P00410"/>
    </source>
</evidence>
<evidence type="ECO:0000250" key="3">
    <source>
        <dbReference type="UniProtKB" id="P68530"/>
    </source>
</evidence>
<evidence type="ECO:0000305" key="4"/>
<sequence>MAHPVQLSLQDATSPIMEELITFHDHAFMAMSLISFLVLYALALTLTTKLTNTNITDAQEMETIWTILPAVILILIALPSLRVLYLTDEVNDPSLTIKSIGHQWYWTYEYTDYGGLIFNSYMLPPLFLKPGDLRLLEVDNRVVLPIEAPVRMMITSQDVLHSWTIPTLGLKTDAVPGRLNQTVFTATRPGVYYGQCSEICGANHSFMPIVADLIPLKIFEMGPVFTL</sequence>
<dbReference type="EC" id="7.1.1.9"/>
<dbReference type="EMBL" id="J02825">
    <property type="protein sequence ID" value="AAA31889.1"/>
    <property type="molecule type" value="mRNA"/>
</dbReference>
<dbReference type="EMBL" id="M58008">
    <property type="protein sequence ID" value="AAA31890.1"/>
    <property type="molecule type" value="Genomic_DNA"/>
</dbReference>
<dbReference type="PIR" id="I84421">
    <property type="entry name" value="I84421"/>
</dbReference>
<dbReference type="SMR" id="P11948"/>
<dbReference type="STRING" id="9541.ENSMFAP00000046139"/>
<dbReference type="Proteomes" id="UP000233100">
    <property type="component" value="Mitochondrion"/>
</dbReference>
<dbReference type="GO" id="GO:0005743">
    <property type="term" value="C:mitochondrial inner membrane"/>
    <property type="evidence" value="ECO:0007669"/>
    <property type="project" value="UniProtKB-SubCell"/>
</dbReference>
<dbReference type="GO" id="GO:0005739">
    <property type="term" value="C:mitochondrion"/>
    <property type="evidence" value="ECO:0000250"/>
    <property type="project" value="UniProtKB"/>
</dbReference>
<dbReference type="GO" id="GO:0045277">
    <property type="term" value="C:respiratory chain complex IV"/>
    <property type="evidence" value="ECO:0000250"/>
    <property type="project" value="UniProtKB"/>
</dbReference>
<dbReference type="GO" id="GO:0005507">
    <property type="term" value="F:copper ion binding"/>
    <property type="evidence" value="ECO:0007669"/>
    <property type="project" value="InterPro"/>
</dbReference>
<dbReference type="GO" id="GO:0004129">
    <property type="term" value="F:cytochrome-c oxidase activity"/>
    <property type="evidence" value="ECO:0007669"/>
    <property type="project" value="UniProtKB-EC"/>
</dbReference>
<dbReference type="GO" id="GO:0042773">
    <property type="term" value="P:ATP synthesis coupled electron transport"/>
    <property type="evidence" value="ECO:0007669"/>
    <property type="project" value="TreeGrafter"/>
</dbReference>
<dbReference type="CDD" id="cd13912">
    <property type="entry name" value="CcO_II_C"/>
    <property type="match status" value="1"/>
</dbReference>
<dbReference type="FunFam" id="1.10.287.90:FF:000001">
    <property type="entry name" value="Cytochrome c oxidase subunit 2"/>
    <property type="match status" value="1"/>
</dbReference>
<dbReference type="FunFam" id="2.60.40.420:FF:000001">
    <property type="entry name" value="Cytochrome c oxidase subunit 2"/>
    <property type="match status" value="1"/>
</dbReference>
<dbReference type="Gene3D" id="1.10.287.90">
    <property type="match status" value="1"/>
</dbReference>
<dbReference type="Gene3D" id="2.60.40.420">
    <property type="entry name" value="Cupredoxins - blue copper proteins"/>
    <property type="match status" value="1"/>
</dbReference>
<dbReference type="InterPro" id="IPR045187">
    <property type="entry name" value="CcO_II"/>
</dbReference>
<dbReference type="InterPro" id="IPR002429">
    <property type="entry name" value="CcO_II-like_C"/>
</dbReference>
<dbReference type="InterPro" id="IPR034210">
    <property type="entry name" value="CcO_II_C"/>
</dbReference>
<dbReference type="InterPro" id="IPR001505">
    <property type="entry name" value="Copper_CuA"/>
</dbReference>
<dbReference type="InterPro" id="IPR008972">
    <property type="entry name" value="Cupredoxin"/>
</dbReference>
<dbReference type="InterPro" id="IPR014222">
    <property type="entry name" value="Cyt_c_oxidase_su2"/>
</dbReference>
<dbReference type="InterPro" id="IPR011759">
    <property type="entry name" value="Cyt_c_oxidase_su2_TM_dom"/>
</dbReference>
<dbReference type="InterPro" id="IPR036257">
    <property type="entry name" value="Cyt_c_oxidase_su2_TM_sf"/>
</dbReference>
<dbReference type="NCBIfam" id="TIGR02866">
    <property type="entry name" value="CoxB"/>
    <property type="match status" value="1"/>
</dbReference>
<dbReference type="PANTHER" id="PTHR22888:SF9">
    <property type="entry name" value="CYTOCHROME C OXIDASE SUBUNIT 2"/>
    <property type="match status" value="1"/>
</dbReference>
<dbReference type="PANTHER" id="PTHR22888">
    <property type="entry name" value="CYTOCHROME C OXIDASE, SUBUNIT II"/>
    <property type="match status" value="1"/>
</dbReference>
<dbReference type="Pfam" id="PF00116">
    <property type="entry name" value="COX2"/>
    <property type="match status" value="1"/>
</dbReference>
<dbReference type="Pfam" id="PF02790">
    <property type="entry name" value="COX2_TM"/>
    <property type="match status" value="1"/>
</dbReference>
<dbReference type="PRINTS" id="PR01166">
    <property type="entry name" value="CYCOXIDASEII"/>
</dbReference>
<dbReference type="SUPFAM" id="SSF49503">
    <property type="entry name" value="Cupredoxins"/>
    <property type="match status" value="1"/>
</dbReference>
<dbReference type="SUPFAM" id="SSF81464">
    <property type="entry name" value="Cytochrome c oxidase subunit II-like, transmembrane region"/>
    <property type="match status" value="1"/>
</dbReference>
<dbReference type="PROSITE" id="PS00078">
    <property type="entry name" value="COX2"/>
    <property type="match status" value="1"/>
</dbReference>
<dbReference type="PROSITE" id="PS50857">
    <property type="entry name" value="COX2_CUA"/>
    <property type="match status" value="1"/>
</dbReference>
<dbReference type="PROSITE" id="PS50999">
    <property type="entry name" value="COX2_TM"/>
    <property type="match status" value="1"/>
</dbReference>
<comment type="function">
    <text evidence="2">Component of the cytochrome c oxidase, the last enzyme in the mitochondrial electron transport chain which drives oxidative phosphorylation. The respiratory chain contains 3 multisubunit complexes succinate dehydrogenase (complex II, CII), ubiquinol-cytochrome c oxidoreductase (cytochrome b-c1 complex, complex III, CIII) and cytochrome c oxidase (complex IV, CIV), that cooperate to transfer electrons derived from NADH and succinate to molecular oxygen, creating an electrochemical gradient over the inner membrane that drives transmembrane transport and the ATP synthase. Cytochrome c oxidase is the component of the respiratory chain that catalyzes the reduction of oxygen to water. Electrons originating from reduced cytochrome c in the intermembrane space (IMS) are transferred via the dinuclear copper A center (CU(A)) of subunit 2 and heme A of subunit 1 to the active site in subunit 1, a binuclear center (BNC) formed by heme A3 and copper B (CU(B)). The BNC reduces molecular oxygen to 2 water molecules using 4 electrons from cytochrome c in the IMS and 4 protons from the mitochondrial matrix.</text>
</comment>
<comment type="catalytic activity">
    <reaction evidence="2">
        <text>4 Fe(II)-[cytochrome c] + O2 + 8 H(+)(in) = 4 Fe(III)-[cytochrome c] + 2 H2O + 4 H(+)(out)</text>
        <dbReference type="Rhea" id="RHEA:11436"/>
        <dbReference type="Rhea" id="RHEA-COMP:10350"/>
        <dbReference type="Rhea" id="RHEA-COMP:14399"/>
        <dbReference type="ChEBI" id="CHEBI:15377"/>
        <dbReference type="ChEBI" id="CHEBI:15378"/>
        <dbReference type="ChEBI" id="CHEBI:15379"/>
        <dbReference type="ChEBI" id="CHEBI:29033"/>
        <dbReference type="ChEBI" id="CHEBI:29034"/>
        <dbReference type="EC" id="7.1.1.9"/>
    </reaction>
    <physiologicalReaction direction="left-to-right" evidence="2">
        <dbReference type="Rhea" id="RHEA:11437"/>
    </physiologicalReaction>
</comment>
<comment type="cofactor">
    <cofactor evidence="3">
        <name>Cu cation</name>
        <dbReference type="ChEBI" id="CHEBI:23378"/>
    </cofactor>
    <text evidence="3">Binds a dinuclear copper A center per subunit.</text>
</comment>
<comment type="subunit">
    <text evidence="1 3">Component of the cytochrome c oxidase (complex IV, CIV), a multisubunit enzyme composed of 14 subunits. The complex is composed of a catalytic core of 3 subunits MT-CO1, MT-CO2 and MT-CO3, encoded in the mitochondrial DNA, and 11 supernumerary subunits COX4I, COX5A, COX5B, COX6A, COX6B, COX6C, COX7A, COX7B, COX7C, COX8 and NDUFA4, which are encoded in the nuclear genome. The complex exists as a monomer or a dimer and forms supercomplexes (SCs) in the inner mitochondrial membrane with NADH-ubiquinone oxidoreductase (complex I, CI) and ubiquinol-cytochrome c oxidoreductase (cytochrome b-c1 complex, complex III, CIII), resulting in different assemblies (supercomplex SCI(1)III(2)IV(1) and megacomplex MCI(2)III(2)IV(2)) (By similarity). Found in a complex with TMEM177, COA6, COX18, COX20, SCO1 and SCO2. Interacts with TMEM177 in a COX20-dependent manner. Interacts with COX20. Interacts with COX16 (By similarity).</text>
</comment>
<comment type="subcellular location">
    <subcellularLocation>
        <location evidence="3">Mitochondrion inner membrane</location>
        <topology evidence="3">Multi-pass membrane protein</topology>
    </subcellularLocation>
</comment>
<comment type="similarity">
    <text evidence="4">Belongs to the cytochrome c oxidase subunit 2 family.</text>
</comment>
<protein>
    <recommendedName>
        <fullName>Cytochrome c oxidase subunit 2</fullName>
        <ecNumber>7.1.1.9</ecNumber>
    </recommendedName>
    <alternativeName>
        <fullName>Cytochrome c oxidase polypeptide II</fullName>
    </alternativeName>
</protein>